<reference key="1">
    <citation type="journal article" date="2006" name="Proc. Natl. Acad. Sci. U.S.A.">
        <title>Comparative genomics of the lactic acid bacteria.</title>
        <authorList>
            <person name="Makarova K.S."/>
            <person name="Slesarev A."/>
            <person name="Wolf Y.I."/>
            <person name="Sorokin A."/>
            <person name="Mirkin B."/>
            <person name="Koonin E.V."/>
            <person name="Pavlov A."/>
            <person name="Pavlova N."/>
            <person name="Karamychev V."/>
            <person name="Polouchine N."/>
            <person name="Shakhova V."/>
            <person name="Grigoriev I."/>
            <person name="Lou Y."/>
            <person name="Rohksar D."/>
            <person name="Lucas S."/>
            <person name="Huang K."/>
            <person name="Goodstein D.M."/>
            <person name="Hawkins T."/>
            <person name="Plengvidhya V."/>
            <person name="Welker D."/>
            <person name="Hughes J."/>
            <person name="Goh Y."/>
            <person name="Benson A."/>
            <person name="Baldwin K."/>
            <person name="Lee J.-H."/>
            <person name="Diaz-Muniz I."/>
            <person name="Dosti B."/>
            <person name="Smeianov V."/>
            <person name="Wechter W."/>
            <person name="Barabote R."/>
            <person name="Lorca G."/>
            <person name="Altermann E."/>
            <person name="Barrangou R."/>
            <person name="Ganesan B."/>
            <person name="Xie Y."/>
            <person name="Rawsthorne H."/>
            <person name="Tamir D."/>
            <person name="Parker C."/>
            <person name="Breidt F."/>
            <person name="Broadbent J.R."/>
            <person name="Hutkins R."/>
            <person name="O'Sullivan D."/>
            <person name="Steele J."/>
            <person name="Unlu G."/>
            <person name="Saier M.H. Jr."/>
            <person name="Klaenhammer T."/>
            <person name="Richardson P."/>
            <person name="Kozyavkin S."/>
            <person name="Weimer B.C."/>
            <person name="Mills D.A."/>
        </authorList>
    </citation>
    <scope>NUCLEOTIDE SEQUENCE [LARGE SCALE GENOMIC DNA]</scope>
    <source>
        <strain>ATCC BAA-331 / PSU-1</strain>
    </source>
</reference>
<feature type="chain" id="PRO_0000386101" description="GTPase Obg">
    <location>
        <begin position="1"/>
        <end position="436"/>
    </location>
</feature>
<feature type="domain" description="Obg" evidence="3">
    <location>
        <begin position="1"/>
        <end position="159"/>
    </location>
</feature>
<feature type="domain" description="OBG-type G" evidence="1">
    <location>
        <begin position="160"/>
        <end position="335"/>
    </location>
</feature>
<feature type="domain" description="OCT" evidence="2">
    <location>
        <begin position="357"/>
        <end position="436"/>
    </location>
</feature>
<feature type="binding site" evidence="1">
    <location>
        <begin position="166"/>
        <end position="173"/>
    </location>
    <ligand>
        <name>GTP</name>
        <dbReference type="ChEBI" id="CHEBI:37565"/>
    </ligand>
</feature>
<feature type="binding site" evidence="1">
    <location>
        <position position="173"/>
    </location>
    <ligand>
        <name>Mg(2+)</name>
        <dbReference type="ChEBI" id="CHEBI:18420"/>
    </ligand>
</feature>
<feature type="binding site" evidence="1">
    <location>
        <begin position="191"/>
        <end position="195"/>
    </location>
    <ligand>
        <name>GTP</name>
        <dbReference type="ChEBI" id="CHEBI:37565"/>
    </ligand>
</feature>
<feature type="binding site" evidence="1">
    <location>
        <position position="193"/>
    </location>
    <ligand>
        <name>Mg(2+)</name>
        <dbReference type="ChEBI" id="CHEBI:18420"/>
    </ligand>
</feature>
<feature type="binding site" evidence="1">
    <location>
        <begin position="213"/>
        <end position="216"/>
    </location>
    <ligand>
        <name>GTP</name>
        <dbReference type="ChEBI" id="CHEBI:37565"/>
    </ligand>
</feature>
<feature type="binding site" evidence="1">
    <location>
        <begin position="285"/>
        <end position="288"/>
    </location>
    <ligand>
        <name>GTP</name>
        <dbReference type="ChEBI" id="CHEBI:37565"/>
    </ligand>
</feature>
<feature type="binding site" evidence="1">
    <location>
        <begin position="316"/>
        <end position="318"/>
    </location>
    <ligand>
        <name>GTP</name>
        <dbReference type="ChEBI" id="CHEBI:37565"/>
    </ligand>
</feature>
<sequence length="436" mass="48196">MAFVDQATIEMKAGNGGDGIISFRHEKFVPLGGPFGGDGGKGGDIYFIVDEGLRTLMDFRYNRHFRAKHGEKGGTKGMTGASADDLYVKVPAGTIISNADTNQQIVDLTENGKKFLIAHGGRGGRGNMRFATPSNPAPEISENGEPGETLKVKLELRVLADVGLVGFPSAGKSTFLSVVTAARPKIAAYHFTTIDPNLGMVQLPDGRDFTIADLPGLIKGASKGVGLGFEFLRHVERTRVLLHMIDMSEESGLGIKPFEAYLQINQELKSYDPRLLDRPMIIVATKMDLPSSKANLEDFKQELANRQINMPIVEISSVTQTGTKQLLLKVADLLDKTPRMIERKEEQSTDDRLYEFKDDHQSTDFQIEHEGDDWIIVSERISKLAKMTNKTTDESLRRFARQLRSFGVDDKLREAGAKDGDMVYIDGADFAFEFEE</sequence>
<dbReference type="EC" id="3.6.5.-" evidence="1"/>
<dbReference type="EMBL" id="CP000411">
    <property type="protein sequence ID" value="ABJ56974.1"/>
    <property type="molecule type" value="Genomic_DNA"/>
</dbReference>
<dbReference type="SMR" id="Q04EZ8"/>
<dbReference type="STRING" id="203123.OEOE_1072"/>
<dbReference type="KEGG" id="ooe:OEOE_1072"/>
<dbReference type="eggNOG" id="COG0536">
    <property type="taxonomic scope" value="Bacteria"/>
</dbReference>
<dbReference type="HOGENOM" id="CLU_011747_2_1_9"/>
<dbReference type="Proteomes" id="UP000000774">
    <property type="component" value="Chromosome"/>
</dbReference>
<dbReference type="GO" id="GO:0005737">
    <property type="term" value="C:cytoplasm"/>
    <property type="evidence" value="ECO:0007669"/>
    <property type="project" value="UniProtKB-SubCell"/>
</dbReference>
<dbReference type="GO" id="GO:0005525">
    <property type="term" value="F:GTP binding"/>
    <property type="evidence" value="ECO:0007669"/>
    <property type="project" value="UniProtKB-UniRule"/>
</dbReference>
<dbReference type="GO" id="GO:0003924">
    <property type="term" value="F:GTPase activity"/>
    <property type="evidence" value="ECO:0007669"/>
    <property type="project" value="UniProtKB-UniRule"/>
</dbReference>
<dbReference type="GO" id="GO:0000287">
    <property type="term" value="F:magnesium ion binding"/>
    <property type="evidence" value="ECO:0007669"/>
    <property type="project" value="InterPro"/>
</dbReference>
<dbReference type="GO" id="GO:0042254">
    <property type="term" value="P:ribosome biogenesis"/>
    <property type="evidence" value="ECO:0007669"/>
    <property type="project" value="UniProtKB-UniRule"/>
</dbReference>
<dbReference type="CDD" id="cd01898">
    <property type="entry name" value="Obg"/>
    <property type="match status" value="1"/>
</dbReference>
<dbReference type="FunFam" id="2.70.210.12:FF:000001">
    <property type="entry name" value="GTPase Obg"/>
    <property type="match status" value="1"/>
</dbReference>
<dbReference type="Gene3D" id="3.30.300.350">
    <property type="entry name" value="GTP-binding protein OBG, C-terminal domain"/>
    <property type="match status" value="1"/>
</dbReference>
<dbReference type="Gene3D" id="2.70.210.12">
    <property type="entry name" value="GTP1/OBG domain"/>
    <property type="match status" value="1"/>
</dbReference>
<dbReference type="Gene3D" id="3.40.50.300">
    <property type="entry name" value="P-loop containing nucleotide triphosphate hydrolases"/>
    <property type="match status" value="1"/>
</dbReference>
<dbReference type="HAMAP" id="MF_01454">
    <property type="entry name" value="GTPase_Obg"/>
    <property type="match status" value="1"/>
</dbReference>
<dbReference type="InterPro" id="IPR031167">
    <property type="entry name" value="G_OBG"/>
</dbReference>
<dbReference type="InterPro" id="IPR006073">
    <property type="entry name" value="GTP-bd"/>
</dbReference>
<dbReference type="InterPro" id="IPR014100">
    <property type="entry name" value="GTP-bd_Obg/CgtA"/>
</dbReference>
<dbReference type="InterPro" id="IPR036346">
    <property type="entry name" value="GTP-bd_prot_GTP1/OBG_C_sf"/>
</dbReference>
<dbReference type="InterPro" id="IPR006074">
    <property type="entry name" value="GTP1-OBG_CS"/>
</dbReference>
<dbReference type="InterPro" id="IPR006169">
    <property type="entry name" value="GTP1_OBG_dom"/>
</dbReference>
<dbReference type="InterPro" id="IPR036726">
    <property type="entry name" value="GTP1_OBG_dom_sf"/>
</dbReference>
<dbReference type="InterPro" id="IPR045086">
    <property type="entry name" value="OBG_GTPase"/>
</dbReference>
<dbReference type="InterPro" id="IPR015349">
    <property type="entry name" value="OCT_dom"/>
</dbReference>
<dbReference type="InterPro" id="IPR027417">
    <property type="entry name" value="P-loop_NTPase"/>
</dbReference>
<dbReference type="NCBIfam" id="TIGR02729">
    <property type="entry name" value="Obg_CgtA"/>
    <property type="match status" value="1"/>
</dbReference>
<dbReference type="NCBIfam" id="TIGR03595">
    <property type="entry name" value="Obg_CgtA_exten"/>
    <property type="match status" value="1"/>
</dbReference>
<dbReference type="NCBIfam" id="NF008954">
    <property type="entry name" value="PRK12296.1"/>
    <property type="match status" value="1"/>
</dbReference>
<dbReference type="NCBIfam" id="NF008955">
    <property type="entry name" value="PRK12297.1"/>
    <property type="match status" value="1"/>
</dbReference>
<dbReference type="NCBIfam" id="NF008956">
    <property type="entry name" value="PRK12299.1"/>
    <property type="match status" value="1"/>
</dbReference>
<dbReference type="PANTHER" id="PTHR11702">
    <property type="entry name" value="DEVELOPMENTALLY REGULATED GTP-BINDING PROTEIN-RELATED"/>
    <property type="match status" value="1"/>
</dbReference>
<dbReference type="PANTHER" id="PTHR11702:SF31">
    <property type="entry name" value="MITOCHONDRIAL RIBOSOME-ASSOCIATED GTPASE 2"/>
    <property type="match status" value="1"/>
</dbReference>
<dbReference type="Pfam" id="PF09269">
    <property type="entry name" value="DUF1967"/>
    <property type="match status" value="1"/>
</dbReference>
<dbReference type="Pfam" id="PF01018">
    <property type="entry name" value="GTP1_OBG"/>
    <property type="match status" value="1"/>
</dbReference>
<dbReference type="Pfam" id="PF01926">
    <property type="entry name" value="MMR_HSR1"/>
    <property type="match status" value="1"/>
</dbReference>
<dbReference type="PIRSF" id="PIRSF002401">
    <property type="entry name" value="GTP_bd_Obg/CgtA"/>
    <property type="match status" value="1"/>
</dbReference>
<dbReference type="PRINTS" id="PR00326">
    <property type="entry name" value="GTP1OBG"/>
</dbReference>
<dbReference type="SUPFAM" id="SSF102741">
    <property type="entry name" value="Obg GTP-binding protein C-terminal domain"/>
    <property type="match status" value="1"/>
</dbReference>
<dbReference type="SUPFAM" id="SSF82051">
    <property type="entry name" value="Obg GTP-binding protein N-terminal domain"/>
    <property type="match status" value="1"/>
</dbReference>
<dbReference type="SUPFAM" id="SSF52540">
    <property type="entry name" value="P-loop containing nucleoside triphosphate hydrolases"/>
    <property type="match status" value="1"/>
</dbReference>
<dbReference type="PROSITE" id="PS51710">
    <property type="entry name" value="G_OBG"/>
    <property type="match status" value="1"/>
</dbReference>
<dbReference type="PROSITE" id="PS00905">
    <property type="entry name" value="GTP1_OBG"/>
    <property type="match status" value="1"/>
</dbReference>
<dbReference type="PROSITE" id="PS51883">
    <property type="entry name" value="OBG"/>
    <property type="match status" value="1"/>
</dbReference>
<dbReference type="PROSITE" id="PS51881">
    <property type="entry name" value="OCT"/>
    <property type="match status" value="1"/>
</dbReference>
<evidence type="ECO:0000255" key="1">
    <source>
        <dbReference type="HAMAP-Rule" id="MF_01454"/>
    </source>
</evidence>
<evidence type="ECO:0000255" key="2">
    <source>
        <dbReference type="PROSITE-ProRule" id="PRU01229"/>
    </source>
</evidence>
<evidence type="ECO:0000255" key="3">
    <source>
        <dbReference type="PROSITE-ProRule" id="PRU01231"/>
    </source>
</evidence>
<name>OBG_OENOB</name>
<keyword id="KW-0963">Cytoplasm</keyword>
<keyword id="KW-0342">GTP-binding</keyword>
<keyword id="KW-0378">Hydrolase</keyword>
<keyword id="KW-0460">Magnesium</keyword>
<keyword id="KW-0479">Metal-binding</keyword>
<keyword id="KW-0547">Nucleotide-binding</keyword>
<keyword id="KW-1185">Reference proteome</keyword>
<organism>
    <name type="scientific">Oenococcus oeni (strain ATCC BAA-331 / PSU-1)</name>
    <dbReference type="NCBI Taxonomy" id="203123"/>
    <lineage>
        <taxon>Bacteria</taxon>
        <taxon>Bacillati</taxon>
        <taxon>Bacillota</taxon>
        <taxon>Bacilli</taxon>
        <taxon>Lactobacillales</taxon>
        <taxon>Lactobacillaceae</taxon>
        <taxon>Oenococcus</taxon>
    </lineage>
</organism>
<protein>
    <recommendedName>
        <fullName evidence="1">GTPase Obg</fullName>
        <ecNumber evidence="1">3.6.5.-</ecNumber>
    </recommendedName>
    <alternativeName>
        <fullName evidence="1">GTP-binding protein Obg</fullName>
    </alternativeName>
</protein>
<accession>Q04EZ8</accession>
<gene>
    <name evidence="1" type="primary">obg</name>
    <name type="ordered locus">OEOE_1072</name>
</gene>
<comment type="function">
    <text evidence="1">An essential GTPase which binds GTP, GDP and possibly (p)ppGpp with moderate affinity, with high nucleotide exchange rates and a fairly low GTP hydrolysis rate. Plays a role in control of the cell cycle, stress response, ribosome biogenesis and in those bacteria that undergo differentiation, in morphogenesis control.</text>
</comment>
<comment type="cofactor">
    <cofactor evidence="1">
        <name>Mg(2+)</name>
        <dbReference type="ChEBI" id="CHEBI:18420"/>
    </cofactor>
</comment>
<comment type="subunit">
    <text evidence="1">Monomer.</text>
</comment>
<comment type="subcellular location">
    <subcellularLocation>
        <location evidence="1">Cytoplasm</location>
    </subcellularLocation>
</comment>
<comment type="similarity">
    <text evidence="1">Belongs to the TRAFAC class OBG-HflX-like GTPase superfamily. OBG GTPase family.</text>
</comment>
<proteinExistence type="inferred from homology"/>